<organism>
    <name type="scientific">Burkholderia cenocepacia (strain HI2424)</name>
    <dbReference type="NCBI Taxonomy" id="331272"/>
    <lineage>
        <taxon>Bacteria</taxon>
        <taxon>Pseudomonadati</taxon>
        <taxon>Pseudomonadota</taxon>
        <taxon>Betaproteobacteria</taxon>
        <taxon>Burkholderiales</taxon>
        <taxon>Burkholderiaceae</taxon>
        <taxon>Burkholderia</taxon>
        <taxon>Burkholderia cepacia complex</taxon>
    </lineage>
</organism>
<accession>A0K730</accession>
<keyword id="KW-0012">Acyltransferase</keyword>
<keyword id="KW-0963">Cytoplasm</keyword>
<keyword id="KW-0808">Transferase</keyword>
<protein>
    <recommendedName>
        <fullName evidence="1">Aspartate/glutamate leucyltransferase</fullName>
        <ecNumber evidence="1">2.3.2.29</ecNumber>
    </recommendedName>
</protein>
<gene>
    <name evidence="1" type="primary">bpt</name>
    <name type="ordered locus">Bcen2424_1555</name>
</gene>
<sequence length="276" mass="31265">MTHPTELPLSPLSALQFYATAPYPCSYLDGRIARSQVATPSHLINSDIYTELVKAGFRRSGVFTYRPYCDGCRACVPVRVPVGEFAPTRTQRRMWKRHRALVATVSPLHYDEEHYALYMRYQSARHAGGGMDRDSRDQYEQFLLQSRINSRLVEFRDLDAPGGEPGKLRMVSMIDILGDGLSSVYTFFEPDDRHTSYGTYNILWQIEQAKSLGLPYVYLGYWIRESPKMAYKANFHPLEGLIDGRWKTLDPERIDLPPVDAALARAPLPGGHSGSG</sequence>
<name>BPT_BURCH</name>
<evidence type="ECO:0000255" key="1">
    <source>
        <dbReference type="HAMAP-Rule" id="MF_00689"/>
    </source>
</evidence>
<feature type="chain" id="PRO_1000045124" description="Aspartate/glutamate leucyltransferase">
    <location>
        <begin position="1"/>
        <end position="276"/>
    </location>
</feature>
<proteinExistence type="inferred from homology"/>
<dbReference type="EC" id="2.3.2.29" evidence="1"/>
<dbReference type="EMBL" id="CP000458">
    <property type="protein sequence ID" value="ABK08307.1"/>
    <property type="molecule type" value="Genomic_DNA"/>
</dbReference>
<dbReference type="RefSeq" id="WP_006476113.1">
    <property type="nucleotide sequence ID" value="NC_008542.1"/>
</dbReference>
<dbReference type="SMR" id="A0K730"/>
<dbReference type="KEGG" id="bch:Bcen2424_1555"/>
<dbReference type="HOGENOM" id="CLU_077607_0_0_4"/>
<dbReference type="GO" id="GO:0005737">
    <property type="term" value="C:cytoplasm"/>
    <property type="evidence" value="ECO:0007669"/>
    <property type="project" value="UniProtKB-SubCell"/>
</dbReference>
<dbReference type="GO" id="GO:0004057">
    <property type="term" value="F:arginyl-tRNA--protein transferase activity"/>
    <property type="evidence" value="ECO:0007669"/>
    <property type="project" value="InterPro"/>
</dbReference>
<dbReference type="GO" id="GO:0008914">
    <property type="term" value="F:leucyl-tRNA--protein transferase activity"/>
    <property type="evidence" value="ECO:0007669"/>
    <property type="project" value="UniProtKB-UniRule"/>
</dbReference>
<dbReference type="GO" id="GO:0071596">
    <property type="term" value="P:ubiquitin-dependent protein catabolic process via the N-end rule pathway"/>
    <property type="evidence" value="ECO:0007669"/>
    <property type="project" value="InterPro"/>
</dbReference>
<dbReference type="HAMAP" id="MF_00689">
    <property type="entry name" value="Bpt"/>
    <property type="match status" value="1"/>
</dbReference>
<dbReference type="InterPro" id="IPR016181">
    <property type="entry name" value="Acyl_CoA_acyltransferase"/>
</dbReference>
<dbReference type="InterPro" id="IPR017138">
    <property type="entry name" value="Asp_Glu_LeuTrfase"/>
</dbReference>
<dbReference type="InterPro" id="IPR030700">
    <property type="entry name" value="N-end_Aminoacyl_Trfase"/>
</dbReference>
<dbReference type="InterPro" id="IPR007472">
    <property type="entry name" value="N-end_Aminoacyl_Trfase_C"/>
</dbReference>
<dbReference type="InterPro" id="IPR007471">
    <property type="entry name" value="N-end_Aminoacyl_Trfase_N"/>
</dbReference>
<dbReference type="NCBIfam" id="NF002341">
    <property type="entry name" value="PRK01305.1-1"/>
    <property type="match status" value="1"/>
</dbReference>
<dbReference type="NCBIfam" id="NF002342">
    <property type="entry name" value="PRK01305.1-3"/>
    <property type="match status" value="1"/>
</dbReference>
<dbReference type="NCBIfam" id="NF002346">
    <property type="entry name" value="PRK01305.2-3"/>
    <property type="match status" value="1"/>
</dbReference>
<dbReference type="PANTHER" id="PTHR21367">
    <property type="entry name" value="ARGININE-TRNA-PROTEIN TRANSFERASE 1"/>
    <property type="match status" value="1"/>
</dbReference>
<dbReference type="PANTHER" id="PTHR21367:SF1">
    <property type="entry name" value="ARGINYL-TRNA--PROTEIN TRANSFERASE 1"/>
    <property type="match status" value="1"/>
</dbReference>
<dbReference type="Pfam" id="PF04377">
    <property type="entry name" value="ATE_C"/>
    <property type="match status" value="1"/>
</dbReference>
<dbReference type="Pfam" id="PF04376">
    <property type="entry name" value="ATE_N"/>
    <property type="match status" value="1"/>
</dbReference>
<dbReference type="PIRSF" id="PIRSF037208">
    <property type="entry name" value="ATE_pro_prd"/>
    <property type="match status" value="1"/>
</dbReference>
<dbReference type="SUPFAM" id="SSF55729">
    <property type="entry name" value="Acyl-CoA N-acyltransferases (Nat)"/>
    <property type="match status" value="1"/>
</dbReference>
<comment type="function">
    <text evidence="1">Functions in the N-end rule pathway of protein degradation where it conjugates Leu from its aminoacyl-tRNA to the N-termini of proteins containing an N-terminal aspartate or glutamate.</text>
</comment>
<comment type="catalytic activity">
    <reaction evidence="1">
        <text>N-terminal L-glutamyl-[protein] + L-leucyl-tRNA(Leu) = N-terminal L-leucyl-L-glutamyl-[protein] + tRNA(Leu) + H(+)</text>
        <dbReference type="Rhea" id="RHEA:50412"/>
        <dbReference type="Rhea" id="RHEA-COMP:9613"/>
        <dbReference type="Rhea" id="RHEA-COMP:9622"/>
        <dbReference type="Rhea" id="RHEA-COMP:12664"/>
        <dbReference type="Rhea" id="RHEA-COMP:12668"/>
        <dbReference type="ChEBI" id="CHEBI:15378"/>
        <dbReference type="ChEBI" id="CHEBI:64721"/>
        <dbReference type="ChEBI" id="CHEBI:78442"/>
        <dbReference type="ChEBI" id="CHEBI:78494"/>
        <dbReference type="ChEBI" id="CHEBI:133041"/>
        <dbReference type="EC" id="2.3.2.29"/>
    </reaction>
</comment>
<comment type="catalytic activity">
    <reaction evidence="1">
        <text>N-terminal L-aspartyl-[protein] + L-leucyl-tRNA(Leu) = N-terminal L-leucyl-L-aspartyl-[protein] + tRNA(Leu) + H(+)</text>
        <dbReference type="Rhea" id="RHEA:50420"/>
        <dbReference type="Rhea" id="RHEA-COMP:9613"/>
        <dbReference type="Rhea" id="RHEA-COMP:9622"/>
        <dbReference type="Rhea" id="RHEA-COMP:12669"/>
        <dbReference type="Rhea" id="RHEA-COMP:12674"/>
        <dbReference type="ChEBI" id="CHEBI:15378"/>
        <dbReference type="ChEBI" id="CHEBI:64720"/>
        <dbReference type="ChEBI" id="CHEBI:78442"/>
        <dbReference type="ChEBI" id="CHEBI:78494"/>
        <dbReference type="ChEBI" id="CHEBI:133042"/>
        <dbReference type="EC" id="2.3.2.29"/>
    </reaction>
</comment>
<comment type="subcellular location">
    <subcellularLocation>
        <location evidence="1">Cytoplasm</location>
    </subcellularLocation>
</comment>
<comment type="similarity">
    <text evidence="1">Belongs to the R-transferase family. Bpt subfamily.</text>
</comment>
<reference key="1">
    <citation type="submission" date="2006-08" db="EMBL/GenBank/DDBJ databases">
        <title>Complete sequence of chromosome 1 of Burkholderia cenocepacia HI2424.</title>
        <authorList>
            <person name="Copeland A."/>
            <person name="Lucas S."/>
            <person name="Lapidus A."/>
            <person name="Barry K."/>
            <person name="Detter J.C."/>
            <person name="Glavina del Rio T."/>
            <person name="Hammon N."/>
            <person name="Israni S."/>
            <person name="Pitluck S."/>
            <person name="Chain P."/>
            <person name="Malfatti S."/>
            <person name="Shin M."/>
            <person name="Vergez L."/>
            <person name="Schmutz J."/>
            <person name="Larimer F."/>
            <person name="Land M."/>
            <person name="Hauser L."/>
            <person name="Kyrpides N."/>
            <person name="Kim E."/>
            <person name="LiPuma J.J."/>
            <person name="Gonzalez C.F."/>
            <person name="Konstantinidis K."/>
            <person name="Tiedje J.M."/>
            <person name="Richardson P."/>
        </authorList>
    </citation>
    <scope>NUCLEOTIDE SEQUENCE [LARGE SCALE GENOMIC DNA]</scope>
    <source>
        <strain>HI2424</strain>
    </source>
</reference>